<gene>
    <name evidence="1" type="primary">xseA</name>
    <name type="ordered locus">Sez_0617</name>
</gene>
<protein>
    <recommendedName>
        <fullName evidence="1">Exodeoxyribonuclease 7 large subunit</fullName>
        <ecNumber evidence="1">3.1.11.6</ecNumber>
    </recommendedName>
    <alternativeName>
        <fullName evidence="1">Exodeoxyribonuclease VII large subunit</fullName>
        <shortName evidence="1">Exonuclease VII large subunit</shortName>
    </alternativeName>
</protein>
<proteinExistence type="inferred from homology"/>
<accession>B4U1W7</accession>
<organism>
    <name type="scientific">Streptococcus equi subsp. zooepidemicus (strain MGCS10565)</name>
    <dbReference type="NCBI Taxonomy" id="552526"/>
    <lineage>
        <taxon>Bacteria</taxon>
        <taxon>Bacillati</taxon>
        <taxon>Bacillota</taxon>
        <taxon>Bacilli</taxon>
        <taxon>Lactobacillales</taxon>
        <taxon>Streptococcaceae</taxon>
        <taxon>Streptococcus</taxon>
    </lineage>
</organism>
<comment type="function">
    <text evidence="1">Bidirectionally degrades single-stranded DNA into large acid-insoluble oligonucleotides, which are then degraded further into small acid-soluble oligonucleotides.</text>
</comment>
<comment type="catalytic activity">
    <reaction evidence="1">
        <text>Exonucleolytic cleavage in either 5'- to 3'- or 3'- to 5'-direction to yield nucleoside 5'-phosphates.</text>
        <dbReference type="EC" id="3.1.11.6"/>
    </reaction>
</comment>
<comment type="subunit">
    <text evidence="1">Heterooligomer composed of large and small subunits.</text>
</comment>
<comment type="subcellular location">
    <subcellularLocation>
        <location evidence="1">Cytoplasm</location>
    </subcellularLocation>
</comment>
<comment type="similarity">
    <text evidence="1">Belongs to the XseA family.</text>
</comment>
<feature type="chain" id="PRO_1000122090" description="Exodeoxyribonuclease 7 large subunit">
    <location>
        <begin position="1"/>
        <end position="446"/>
    </location>
</feature>
<dbReference type="EC" id="3.1.11.6" evidence="1"/>
<dbReference type="EMBL" id="CP001129">
    <property type="protein sequence ID" value="ACG61984.1"/>
    <property type="molecule type" value="Genomic_DNA"/>
</dbReference>
<dbReference type="RefSeq" id="WP_012515260.1">
    <property type="nucleotide sequence ID" value="NC_011134.1"/>
</dbReference>
<dbReference type="SMR" id="B4U1W7"/>
<dbReference type="KEGG" id="sez:Sez_0617"/>
<dbReference type="HOGENOM" id="CLU_023625_3_1_9"/>
<dbReference type="Proteomes" id="UP000001873">
    <property type="component" value="Chromosome"/>
</dbReference>
<dbReference type="GO" id="GO:0005737">
    <property type="term" value="C:cytoplasm"/>
    <property type="evidence" value="ECO:0007669"/>
    <property type="project" value="UniProtKB-SubCell"/>
</dbReference>
<dbReference type="GO" id="GO:0009318">
    <property type="term" value="C:exodeoxyribonuclease VII complex"/>
    <property type="evidence" value="ECO:0007669"/>
    <property type="project" value="InterPro"/>
</dbReference>
<dbReference type="GO" id="GO:0008855">
    <property type="term" value="F:exodeoxyribonuclease VII activity"/>
    <property type="evidence" value="ECO:0007669"/>
    <property type="project" value="UniProtKB-UniRule"/>
</dbReference>
<dbReference type="GO" id="GO:0003676">
    <property type="term" value="F:nucleic acid binding"/>
    <property type="evidence" value="ECO:0007669"/>
    <property type="project" value="InterPro"/>
</dbReference>
<dbReference type="GO" id="GO:0006308">
    <property type="term" value="P:DNA catabolic process"/>
    <property type="evidence" value="ECO:0007669"/>
    <property type="project" value="UniProtKB-UniRule"/>
</dbReference>
<dbReference type="CDD" id="cd04489">
    <property type="entry name" value="ExoVII_LU_OBF"/>
    <property type="match status" value="1"/>
</dbReference>
<dbReference type="HAMAP" id="MF_00378">
    <property type="entry name" value="Exonuc_7_L"/>
    <property type="match status" value="1"/>
</dbReference>
<dbReference type="InterPro" id="IPR003753">
    <property type="entry name" value="Exonuc_VII_L"/>
</dbReference>
<dbReference type="InterPro" id="IPR020579">
    <property type="entry name" value="Exonuc_VII_lsu_C"/>
</dbReference>
<dbReference type="InterPro" id="IPR025824">
    <property type="entry name" value="OB-fold_nuc-bd_dom"/>
</dbReference>
<dbReference type="NCBIfam" id="TIGR00237">
    <property type="entry name" value="xseA"/>
    <property type="match status" value="1"/>
</dbReference>
<dbReference type="PANTHER" id="PTHR30008">
    <property type="entry name" value="EXODEOXYRIBONUCLEASE 7 LARGE SUBUNIT"/>
    <property type="match status" value="1"/>
</dbReference>
<dbReference type="PANTHER" id="PTHR30008:SF0">
    <property type="entry name" value="EXODEOXYRIBONUCLEASE 7 LARGE SUBUNIT"/>
    <property type="match status" value="1"/>
</dbReference>
<dbReference type="Pfam" id="PF02601">
    <property type="entry name" value="Exonuc_VII_L"/>
    <property type="match status" value="1"/>
</dbReference>
<dbReference type="Pfam" id="PF13742">
    <property type="entry name" value="tRNA_anti_2"/>
    <property type="match status" value="1"/>
</dbReference>
<evidence type="ECO:0000255" key="1">
    <source>
        <dbReference type="HAMAP-Rule" id="MF_00378"/>
    </source>
</evidence>
<name>EX7L_STREM</name>
<keyword id="KW-0963">Cytoplasm</keyword>
<keyword id="KW-0269">Exonuclease</keyword>
<keyword id="KW-0378">Hydrolase</keyword>
<keyword id="KW-0540">Nuclease</keyword>
<sequence>MADYLSVTQLTKYLKLKFDRDPYLERVYLTGQVSNFRKRPNHQYFSLKDEGAVIQATMWAGAYKKLGFDLEEGMKLNVVGRIQLYEPNGSYSIIIEKAEPDGIGALALQFEQLRQKLAGEGFFDERHKQALPQFVTKVGVVTSPSGAVIRDIITTISRRFPGVSILLFPTKVQGEGAAQEVAANIARANQREDLDLLIVGRGGGSIEDLWAFNEEIVVQAIFESRLPVISSVGHETDTTLADFVADRRAATPTAAAELATPITKTDIVSWIAEQQNRSYQACLRYIRQGQERVDKLSYSVMFRQPERLYDAYSQRLDRLTTSLMTTFKETLSEAKQEHLILEHRLASVNVQARLERYQDRLATAHRLLIANMTNQYDSKLAGFERAQAALLSLDTSRIIARGYALLKKDGAVAACVKDIKKGDHLSIVMRDGQLEVEVEDVNEKNI</sequence>
<reference key="1">
    <citation type="journal article" date="2008" name="PLoS ONE">
        <title>Genome sequence of a lancefield group C Streptococcus zooepidemicus strain causing epidemic nephritis: new information about an old disease.</title>
        <authorList>
            <person name="Beres S.B."/>
            <person name="Sesso R."/>
            <person name="Pinto S.W.L."/>
            <person name="Hoe N.P."/>
            <person name="Porcella S.F."/>
            <person name="Deleo F.R."/>
            <person name="Musser J.M."/>
        </authorList>
    </citation>
    <scope>NUCLEOTIDE SEQUENCE [LARGE SCALE GENOMIC DNA]</scope>
    <source>
        <strain>MGCS10565</strain>
    </source>
</reference>